<protein>
    <recommendedName>
        <fullName evidence="1">Tryptophan synthase alpha chain</fullName>
        <ecNumber evidence="1">4.2.1.20</ecNumber>
    </recommendedName>
</protein>
<organism>
    <name type="scientific">Chromobacterium violaceum (strain ATCC 12472 / DSM 30191 / JCM 1249 / CCUG 213 / NBRC 12614 / NCIMB 9131 / NCTC 9757 / MK)</name>
    <dbReference type="NCBI Taxonomy" id="243365"/>
    <lineage>
        <taxon>Bacteria</taxon>
        <taxon>Pseudomonadati</taxon>
        <taxon>Pseudomonadota</taxon>
        <taxon>Betaproteobacteria</taxon>
        <taxon>Neisseriales</taxon>
        <taxon>Chromobacteriaceae</taxon>
        <taxon>Chromobacterium</taxon>
    </lineage>
</organism>
<name>TRPA_CHRVO</name>
<gene>
    <name evidence="1" type="primary">trpA</name>
    <name type="ordered locus">CV_2761</name>
</gene>
<sequence>MSRIANCFAELAGKKALIPFITAGDPHPGLTVSLMHGLVDGGADIIELGVPFSDPMADGPVIQRASERALKHKVGLRHVLEMVAEFRRDNATTPVVLMGYLNPLCAMGYTEFASRAKAAGVDGVLTVDCPPEEAAELESALDAHGLDTVFLVAPTTPPSRVAEIAKLARGYVYYVSLKGVTGAGHLDIEDVARKIAALRQQLPLPIGVGFGIRDAATAKAIAAAADAVVVGSRLVQEIEAATPETAREQLTRLVAELKAAIR</sequence>
<proteinExistence type="inferred from homology"/>
<dbReference type="EC" id="4.2.1.20" evidence="1"/>
<dbReference type="EMBL" id="AE016825">
    <property type="protein sequence ID" value="AAQ60429.1"/>
    <property type="molecule type" value="Genomic_DNA"/>
</dbReference>
<dbReference type="RefSeq" id="WP_011136308.1">
    <property type="nucleotide sequence ID" value="NC_005085.1"/>
</dbReference>
<dbReference type="SMR" id="Q7NUD9"/>
<dbReference type="STRING" id="243365.CV_2761"/>
<dbReference type="KEGG" id="cvi:CV_2761"/>
<dbReference type="eggNOG" id="COG0159">
    <property type="taxonomic scope" value="Bacteria"/>
</dbReference>
<dbReference type="HOGENOM" id="CLU_016734_0_0_4"/>
<dbReference type="OrthoDB" id="9804578at2"/>
<dbReference type="UniPathway" id="UPA00035">
    <property type="reaction ID" value="UER00044"/>
</dbReference>
<dbReference type="Proteomes" id="UP000001424">
    <property type="component" value="Chromosome"/>
</dbReference>
<dbReference type="GO" id="GO:0005829">
    <property type="term" value="C:cytosol"/>
    <property type="evidence" value="ECO:0007669"/>
    <property type="project" value="TreeGrafter"/>
</dbReference>
<dbReference type="GO" id="GO:0004834">
    <property type="term" value="F:tryptophan synthase activity"/>
    <property type="evidence" value="ECO:0007669"/>
    <property type="project" value="UniProtKB-UniRule"/>
</dbReference>
<dbReference type="CDD" id="cd04724">
    <property type="entry name" value="Tryptophan_synthase_alpha"/>
    <property type="match status" value="1"/>
</dbReference>
<dbReference type="FunFam" id="3.20.20.70:FF:000037">
    <property type="entry name" value="Tryptophan synthase alpha chain"/>
    <property type="match status" value="1"/>
</dbReference>
<dbReference type="Gene3D" id="3.20.20.70">
    <property type="entry name" value="Aldolase class I"/>
    <property type="match status" value="1"/>
</dbReference>
<dbReference type="HAMAP" id="MF_00131">
    <property type="entry name" value="Trp_synth_alpha"/>
    <property type="match status" value="1"/>
</dbReference>
<dbReference type="InterPro" id="IPR013785">
    <property type="entry name" value="Aldolase_TIM"/>
</dbReference>
<dbReference type="InterPro" id="IPR011060">
    <property type="entry name" value="RibuloseP-bd_barrel"/>
</dbReference>
<dbReference type="InterPro" id="IPR018204">
    <property type="entry name" value="Trp_synthase_alpha_AS"/>
</dbReference>
<dbReference type="InterPro" id="IPR002028">
    <property type="entry name" value="Trp_synthase_suA"/>
</dbReference>
<dbReference type="NCBIfam" id="TIGR00262">
    <property type="entry name" value="trpA"/>
    <property type="match status" value="1"/>
</dbReference>
<dbReference type="PANTHER" id="PTHR43406:SF1">
    <property type="entry name" value="TRYPTOPHAN SYNTHASE ALPHA CHAIN, CHLOROPLASTIC"/>
    <property type="match status" value="1"/>
</dbReference>
<dbReference type="PANTHER" id="PTHR43406">
    <property type="entry name" value="TRYPTOPHAN SYNTHASE, ALPHA CHAIN"/>
    <property type="match status" value="1"/>
</dbReference>
<dbReference type="Pfam" id="PF00290">
    <property type="entry name" value="Trp_syntA"/>
    <property type="match status" value="1"/>
</dbReference>
<dbReference type="SUPFAM" id="SSF51366">
    <property type="entry name" value="Ribulose-phoshate binding barrel"/>
    <property type="match status" value="1"/>
</dbReference>
<dbReference type="PROSITE" id="PS00167">
    <property type="entry name" value="TRP_SYNTHASE_ALPHA"/>
    <property type="match status" value="1"/>
</dbReference>
<evidence type="ECO:0000255" key="1">
    <source>
        <dbReference type="HAMAP-Rule" id="MF_00131"/>
    </source>
</evidence>
<comment type="function">
    <text evidence="1">The alpha subunit is responsible for the aldol cleavage of indoleglycerol phosphate to indole and glyceraldehyde 3-phosphate.</text>
</comment>
<comment type="catalytic activity">
    <reaction evidence="1">
        <text>(1S,2R)-1-C-(indol-3-yl)glycerol 3-phosphate + L-serine = D-glyceraldehyde 3-phosphate + L-tryptophan + H2O</text>
        <dbReference type="Rhea" id="RHEA:10532"/>
        <dbReference type="ChEBI" id="CHEBI:15377"/>
        <dbReference type="ChEBI" id="CHEBI:33384"/>
        <dbReference type="ChEBI" id="CHEBI:57912"/>
        <dbReference type="ChEBI" id="CHEBI:58866"/>
        <dbReference type="ChEBI" id="CHEBI:59776"/>
        <dbReference type="EC" id="4.2.1.20"/>
    </reaction>
</comment>
<comment type="pathway">
    <text evidence="1">Amino-acid biosynthesis; L-tryptophan biosynthesis; L-tryptophan from chorismate: step 5/5.</text>
</comment>
<comment type="subunit">
    <text evidence="1">Tetramer of two alpha and two beta chains.</text>
</comment>
<comment type="similarity">
    <text evidence="1">Belongs to the TrpA family.</text>
</comment>
<reference key="1">
    <citation type="journal article" date="2003" name="Proc. Natl. Acad. Sci. U.S.A.">
        <title>The complete genome sequence of Chromobacterium violaceum reveals remarkable and exploitable bacterial adaptability.</title>
        <authorList>
            <person name="Vasconcelos A.T.R."/>
            <person name="de Almeida D.F."/>
            <person name="Hungria M."/>
            <person name="Guimaraes C.T."/>
            <person name="Antonio R.V."/>
            <person name="Almeida F.C."/>
            <person name="de Almeida L.G.P."/>
            <person name="de Almeida R."/>
            <person name="Alves-Gomes J.A."/>
            <person name="Andrade E.M."/>
            <person name="Araripe J."/>
            <person name="de Araujo M.F.F."/>
            <person name="Astolfi-Filho S."/>
            <person name="Azevedo V."/>
            <person name="Baptista A.J."/>
            <person name="Bataus L.A.M."/>
            <person name="Batista J.S."/>
            <person name="Belo A."/>
            <person name="van den Berg C."/>
            <person name="Bogo M."/>
            <person name="Bonatto S."/>
            <person name="Bordignon J."/>
            <person name="Brigido M.M."/>
            <person name="Brito C.A."/>
            <person name="Brocchi M."/>
            <person name="Burity H.A."/>
            <person name="Camargo A.A."/>
            <person name="Cardoso D.D.P."/>
            <person name="Carneiro N.P."/>
            <person name="Carraro D.M."/>
            <person name="Carvalho C.M.B."/>
            <person name="Cascardo J.C.M."/>
            <person name="Cavada B.S."/>
            <person name="Chueire L.M.O."/>
            <person name="Creczynski-Pasa T.B."/>
            <person name="Cunha-Junior N.C."/>
            <person name="Fagundes N."/>
            <person name="Falcao C.L."/>
            <person name="Fantinatti F."/>
            <person name="Farias I.P."/>
            <person name="Felipe M.S.S."/>
            <person name="Ferrari L.P."/>
            <person name="Ferro J.A."/>
            <person name="Ferro M.I.T."/>
            <person name="Franco G.R."/>
            <person name="Freitas N.S.A."/>
            <person name="Furlan L.R."/>
            <person name="Gazzinelli R.T."/>
            <person name="Gomes E.A."/>
            <person name="Goncalves P.R."/>
            <person name="Grangeiro T.B."/>
            <person name="Grattapaglia D."/>
            <person name="Grisard E.C."/>
            <person name="Hanna E.S."/>
            <person name="Jardim S.N."/>
            <person name="Laurino J."/>
            <person name="Leoi L.C.T."/>
            <person name="Lima L.F.A."/>
            <person name="Loureiro M.F."/>
            <person name="Lyra M.C.C.P."/>
            <person name="Madeira H.M.F."/>
            <person name="Manfio G.P."/>
            <person name="Maranhao A.Q."/>
            <person name="Martins W.S."/>
            <person name="di Mauro S.M.Z."/>
            <person name="de Medeiros S.R.B."/>
            <person name="Meissner R.V."/>
            <person name="Moreira M.A.M."/>
            <person name="Nascimento F.F."/>
            <person name="Nicolas M.F."/>
            <person name="Oliveira J.G."/>
            <person name="Oliveira S.C."/>
            <person name="Paixao R.F.C."/>
            <person name="Parente J.A."/>
            <person name="Pedrosa F.O."/>
            <person name="Pena S.D.J."/>
            <person name="Pereira J.O."/>
            <person name="Pereira M."/>
            <person name="Pinto L.S.R.C."/>
            <person name="Pinto L.S."/>
            <person name="Porto J.I.R."/>
            <person name="Potrich D.P."/>
            <person name="Ramalho-Neto C.E."/>
            <person name="Reis A.M.M."/>
            <person name="Rigo L.U."/>
            <person name="Rondinelli E."/>
            <person name="Santos E.B.P."/>
            <person name="Santos F.R."/>
            <person name="Schneider M.P.C."/>
            <person name="Seuanez H.N."/>
            <person name="Silva A.M.R."/>
            <person name="da Silva A.L.C."/>
            <person name="Silva D.W."/>
            <person name="Silva R."/>
            <person name="Simoes I.C."/>
            <person name="Simon D."/>
            <person name="Soares C.M.A."/>
            <person name="Soares R.B.A."/>
            <person name="Souza E.M."/>
            <person name="Souza K.R.L."/>
            <person name="Souza R.C."/>
            <person name="Steffens M.B.R."/>
            <person name="Steindel M."/>
            <person name="Teixeira S.R."/>
            <person name="Urmenyi T."/>
            <person name="Vettore A."/>
            <person name="Wassem R."/>
            <person name="Zaha A."/>
            <person name="Simpson A.J.G."/>
        </authorList>
    </citation>
    <scope>NUCLEOTIDE SEQUENCE [LARGE SCALE GENOMIC DNA]</scope>
    <source>
        <strain>ATCC 12472 / DSM 30191 / JCM 1249 / CCUG 213 / NBRC 12614 / NCIMB 9131 / NCTC 9757 / MK</strain>
    </source>
</reference>
<accession>Q7NUD9</accession>
<keyword id="KW-0028">Amino-acid biosynthesis</keyword>
<keyword id="KW-0057">Aromatic amino acid biosynthesis</keyword>
<keyword id="KW-0456">Lyase</keyword>
<keyword id="KW-1185">Reference proteome</keyword>
<keyword id="KW-0822">Tryptophan biosynthesis</keyword>
<feature type="chain" id="PRO_0000098769" description="Tryptophan synthase alpha chain">
    <location>
        <begin position="1"/>
        <end position="262"/>
    </location>
</feature>
<feature type="active site" description="Proton acceptor" evidence="1">
    <location>
        <position position="47"/>
    </location>
</feature>
<feature type="active site" description="Proton acceptor" evidence="1">
    <location>
        <position position="58"/>
    </location>
</feature>